<protein>
    <recommendedName>
        <fullName evidence="1">Probable endonuclease 4</fullName>
        <ecNumber evidence="1">3.1.21.2</ecNumber>
    </recommendedName>
    <alternativeName>
        <fullName evidence="1">Endodeoxyribonuclease IV</fullName>
    </alternativeName>
    <alternativeName>
        <fullName evidence="1">Endonuclease IV</fullName>
    </alternativeName>
</protein>
<name>END4_BACVZ</name>
<comment type="function">
    <text evidence="1">Endonuclease IV plays a role in DNA repair. It cleaves phosphodiester bonds at apurinic or apyrimidinic (AP) sites, generating a 3'-hydroxyl group and a 5'-terminal sugar phosphate.</text>
</comment>
<comment type="catalytic activity">
    <reaction evidence="1">
        <text>Endonucleolytic cleavage to 5'-phosphooligonucleotide end-products.</text>
        <dbReference type="EC" id="3.1.21.2"/>
    </reaction>
</comment>
<comment type="cofactor">
    <cofactor evidence="1">
        <name>Zn(2+)</name>
        <dbReference type="ChEBI" id="CHEBI:29105"/>
    </cofactor>
    <text evidence="1">Binds 3 Zn(2+) ions.</text>
</comment>
<comment type="similarity">
    <text evidence="1">Belongs to the AP endonuclease 2 family.</text>
</comment>
<sequence length="297" mass="32792">MLKIGSHVSMSGKHMLLAASKEAVSYGANTFMIYTGAPQNTRRKKIEDLNIEAGRAHMKENGIDEIVVHAPYIINIGNTTNPATFELGVDFLRSEIERTAAIGARQIVLHPGAHVGAGAETGIKKIIEGLNEVIVPGQNVQIALETMAGKGSECGRSFEELAEIIAGVTHNEHLSVCFDTCHTHDAGYDVANDFDGVLNEFDKIVGIDRIKVLHVNDSKNIKGARKDRHENIGFGEIGFDALQYIVHHEQLADIPKILETPYVGEDKKNKKPPYRFEIEMLKEKQFDKELLEKISAQ</sequence>
<feature type="chain" id="PRO_1000011288" description="Probable endonuclease 4">
    <location>
        <begin position="1"/>
        <end position="297"/>
    </location>
</feature>
<feature type="binding site" evidence="1">
    <location>
        <position position="69"/>
    </location>
    <ligand>
        <name>Zn(2+)</name>
        <dbReference type="ChEBI" id="CHEBI:29105"/>
        <label>1</label>
    </ligand>
</feature>
<feature type="binding site" evidence="1">
    <location>
        <position position="110"/>
    </location>
    <ligand>
        <name>Zn(2+)</name>
        <dbReference type="ChEBI" id="CHEBI:29105"/>
        <label>1</label>
    </ligand>
</feature>
<feature type="binding site" evidence="1">
    <location>
        <position position="145"/>
    </location>
    <ligand>
        <name>Zn(2+)</name>
        <dbReference type="ChEBI" id="CHEBI:29105"/>
        <label>1</label>
    </ligand>
</feature>
<feature type="binding site" evidence="1">
    <location>
        <position position="145"/>
    </location>
    <ligand>
        <name>Zn(2+)</name>
        <dbReference type="ChEBI" id="CHEBI:29105"/>
        <label>2</label>
    </ligand>
</feature>
<feature type="binding site" evidence="1">
    <location>
        <position position="179"/>
    </location>
    <ligand>
        <name>Zn(2+)</name>
        <dbReference type="ChEBI" id="CHEBI:29105"/>
        <label>2</label>
    </ligand>
</feature>
<feature type="binding site" evidence="1">
    <location>
        <position position="182"/>
    </location>
    <ligand>
        <name>Zn(2+)</name>
        <dbReference type="ChEBI" id="CHEBI:29105"/>
        <label>3</label>
    </ligand>
</feature>
<feature type="binding site" evidence="1">
    <location>
        <position position="214"/>
    </location>
    <ligand>
        <name>Zn(2+)</name>
        <dbReference type="ChEBI" id="CHEBI:29105"/>
        <label>2</label>
    </ligand>
</feature>
<feature type="binding site" evidence="1">
    <location>
        <position position="227"/>
    </location>
    <ligand>
        <name>Zn(2+)</name>
        <dbReference type="ChEBI" id="CHEBI:29105"/>
        <label>3</label>
    </ligand>
</feature>
<feature type="binding site" evidence="1">
    <location>
        <position position="229"/>
    </location>
    <ligand>
        <name>Zn(2+)</name>
        <dbReference type="ChEBI" id="CHEBI:29105"/>
        <label>3</label>
    </ligand>
</feature>
<feature type="binding site" evidence="1">
    <location>
        <position position="259"/>
    </location>
    <ligand>
        <name>Zn(2+)</name>
        <dbReference type="ChEBI" id="CHEBI:29105"/>
        <label>2</label>
    </ligand>
</feature>
<keyword id="KW-0227">DNA damage</keyword>
<keyword id="KW-0234">DNA repair</keyword>
<keyword id="KW-0255">Endonuclease</keyword>
<keyword id="KW-0378">Hydrolase</keyword>
<keyword id="KW-0479">Metal-binding</keyword>
<keyword id="KW-0540">Nuclease</keyword>
<keyword id="KW-0862">Zinc</keyword>
<evidence type="ECO:0000255" key="1">
    <source>
        <dbReference type="HAMAP-Rule" id="MF_00152"/>
    </source>
</evidence>
<organism>
    <name type="scientific">Bacillus velezensis (strain DSM 23117 / BGSC 10A6 / LMG 26770 / FZB42)</name>
    <name type="common">Bacillus amyloliquefaciens subsp. plantarum</name>
    <dbReference type="NCBI Taxonomy" id="326423"/>
    <lineage>
        <taxon>Bacteria</taxon>
        <taxon>Bacillati</taxon>
        <taxon>Bacillota</taxon>
        <taxon>Bacilli</taxon>
        <taxon>Bacillales</taxon>
        <taxon>Bacillaceae</taxon>
        <taxon>Bacillus</taxon>
        <taxon>Bacillus amyloliquefaciens group</taxon>
    </lineage>
</organism>
<dbReference type="EC" id="3.1.21.2" evidence="1"/>
<dbReference type="EMBL" id="CP000560">
    <property type="protein sequence ID" value="ABS74704.1"/>
    <property type="molecule type" value="Genomic_DNA"/>
</dbReference>
<dbReference type="RefSeq" id="WP_012118004.1">
    <property type="nucleotide sequence ID" value="NC_009725.2"/>
</dbReference>
<dbReference type="SMR" id="A7Z6S8"/>
<dbReference type="GeneID" id="93081481"/>
<dbReference type="KEGG" id="bay:RBAM_023440"/>
<dbReference type="HOGENOM" id="CLU_025885_4_1_9"/>
<dbReference type="Proteomes" id="UP000001120">
    <property type="component" value="Chromosome"/>
</dbReference>
<dbReference type="GO" id="GO:0008833">
    <property type="term" value="F:deoxyribonuclease IV (phage-T4-induced) activity"/>
    <property type="evidence" value="ECO:0007669"/>
    <property type="project" value="UniProtKB-UniRule"/>
</dbReference>
<dbReference type="GO" id="GO:0003677">
    <property type="term" value="F:DNA binding"/>
    <property type="evidence" value="ECO:0007669"/>
    <property type="project" value="InterPro"/>
</dbReference>
<dbReference type="GO" id="GO:0003906">
    <property type="term" value="F:DNA-(apurinic or apyrimidinic site) endonuclease activity"/>
    <property type="evidence" value="ECO:0007669"/>
    <property type="project" value="TreeGrafter"/>
</dbReference>
<dbReference type="GO" id="GO:0008081">
    <property type="term" value="F:phosphoric diester hydrolase activity"/>
    <property type="evidence" value="ECO:0007669"/>
    <property type="project" value="TreeGrafter"/>
</dbReference>
<dbReference type="GO" id="GO:0008270">
    <property type="term" value="F:zinc ion binding"/>
    <property type="evidence" value="ECO:0007669"/>
    <property type="project" value="UniProtKB-UniRule"/>
</dbReference>
<dbReference type="GO" id="GO:0006284">
    <property type="term" value="P:base-excision repair"/>
    <property type="evidence" value="ECO:0007669"/>
    <property type="project" value="TreeGrafter"/>
</dbReference>
<dbReference type="CDD" id="cd00019">
    <property type="entry name" value="AP2Ec"/>
    <property type="match status" value="1"/>
</dbReference>
<dbReference type="FunFam" id="3.20.20.150:FF:000001">
    <property type="entry name" value="Probable endonuclease 4"/>
    <property type="match status" value="1"/>
</dbReference>
<dbReference type="Gene3D" id="3.20.20.150">
    <property type="entry name" value="Divalent-metal-dependent TIM barrel enzymes"/>
    <property type="match status" value="1"/>
</dbReference>
<dbReference type="HAMAP" id="MF_00152">
    <property type="entry name" value="Nfo"/>
    <property type="match status" value="1"/>
</dbReference>
<dbReference type="InterPro" id="IPR001719">
    <property type="entry name" value="AP_endonuc_2"/>
</dbReference>
<dbReference type="InterPro" id="IPR018246">
    <property type="entry name" value="AP_endonuc_F2_Zn_BS"/>
</dbReference>
<dbReference type="InterPro" id="IPR036237">
    <property type="entry name" value="Xyl_isomerase-like_sf"/>
</dbReference>
<dbReference type="InterPro" id="IPR013022">
    <property type="entry name" value="Xyl_isomerase-like_TIM-brl"/>
</dbReference>
<dbReference type="NCBIfam" id="TIGR00587">
    <property type="entry name" value="nfo"/>
    <property type="match status" value="1"/>
</dbReference>
<dbReference type="NCBIfam" id="NF002196">
    <property type="entry name" value="PRK01060.1-1"/>
    <property type="match status" value="1"/>
</dbReference>
<dbReference type="PANTHER" id="PTHR21445:SF0">
    <property type="entry name" value="APURINIC-APYRIMIDINIC ENDONUCLEASE"/>
    <property type="match status" value="1"/>
</dbReference>
<dbReference type="PANTHER" id="PTHR21445">
    <property type="entry name" value="ENDONUCLEASE IV ENDODEOXYRIBONUCLEASE IV"/>
    <property type="match status" value="1"/>
</dbReference>
<dbReference type="Pfam" id="PF01261">
    <property type="entry name" value="AP_endonuc_2"/>
    <property type="match status" value="1"/>
</dbReference>
<dbReference type="SMART" id="SM00518">
    <property type="entry name" value="AP2Ec"/>
    <property type="match status" value="1"/>
</dbReference>
<dbReference type="SUPFAM" id="SSF51658">
    <property type="entry name" value="Xylose isomerase-like"/>
    <property type="match status" value="1"/>
</dbReference>
<dbReference type="PROSITE" id="PS00729">
    <property type="entry name" value="AP_NUCLEASE_F2_1"/>
    <property type="match status" value="1"/>
</dbReference>
<dbReference type="PROSITE" id="PS00730">
    <property type="entry name" value="AP_NUCLEASE_F2_2"/>
    <property type="match status" value="1"/>
</dbReference>
<dbReference type="PROSITE" id="PS00731">
    <property type="entry name" value="AP_NUCLEASE_F2_3"/>
    <property type="match status" value="1"/>
</dbReference>
<dbReference type="PROSITE" id="PS51432">
    <property type="entry name" value="AP_NUCLEASE_F2_4"/>
    <property type="match status" value="1"/>
</dbReference>
<gene>
    <name evidence="1" type="primary">nfo</name>
    <name type="ordered locus">RBAM_023440</name>
</gene>
<proteinExistence type="inferred from homology"/>
<reference key="1">
    <citation type="journal article" date="2007" name="Nat. Biotechnol.">
        <title>Comparative analysis of the complete genome sequence of the plant growth-promoting bacterium Bacillus amyloliquefaciens FZB42.</title>
        <authorList>
            <person name="Chen X.H."/>
            <person name="Koumoutsi A."/>
            <person name="Scholz R."/>
            <person name="Eisenreich A."/>
            <person name="Schneider K."/>
            <person name="Heinemeyer I."/>
            <person name="Morgenstern B."/>
            <person name="Voss B."/>
            <person name="Hess W.R."/>
            <person name="Reva O."/>
            <person name="Junge H."/>
            <person name="Voigt B."/>
            <person name="Jungblut P.R."/>
            <person name="Vater J."/>
            <person name="Suessmuth R."/>
            <person name="Liesegang H."/>
            <person name="Strittmatter A."/>
            <person name="Gottschalk G."/>
            <person name="Borriss R."/>
        </authorList>
    </citation>
    <scope>NUCLEOTIDE SEQUENCE [LARGE SCALE GENOMIC DNA]</scope>
    <source>
        <strain>DSM 23117 / BGSC 10A6 / LMG 26770 / FZB42</strain>
    </source>
</reference>
<accession>A7Z6S8</accession>